<evidence type="ECO:0000255" key="1">
    <source>
        <dbReference type="HAMAP-Rule" id="MF_01630"/>
    </source>
</evidence>
<feature type="signal peptide" description="Tat-type signal" evidence="1">
    <location>
        <begin position="1"/>
        <end position="31"/>
    </location>
</feature>
<feature type="chain" id="PRO_5000201017" description="Periplasmic nitrate reductase" evidence="1">
    <location>
        <begin position="32"/>
        <end position="831"/>
    </location>
</feature>
<feature type="domain" description="4Fe-4S Mo/W bis-MGD-type" evidence="1">
    <location>
        <begin position="40"/>
        <end position="96"/>
    </location>
</feature>
<feature type="binding site" evidence="1">
    <location>
        <position position="47"/>
    </location>
    <ligand>
        <name>[4Fe-4S] cluster</name>
        <dbReference type="ChEBI" id="CHEBI:49883"/>
    </ligand>
</feature>
<feature type="binding site" evidence="1">
    <location>
        <position position="50"/>
    </location>
    <ligand>
        <name>[4Fe-4S] cluster</name>
        <dbReference type="ChEBI" id="CHEBI:49883"/>
    </ligand>
</feature>
<feature type="binding site" evidence="1">
    <location>
        <position position="54"/>
    </location>
    <ligand>
        <name>[4Fe-4S] cluster</name>
        <dbReference type="ChEBI" id="CHEBI:49883"/>
    </ligand>
</feature>
<feature type="binding site" evidence="1">
    <location>
        <position position="82"/>
    </location>
    <ligand>
        <name>[4Fe-4S] cluster</name>
        <dbReference type="ChEBI" id="CHEBI:49883"/>
    </ligand>
</feature>
<feature type="binding site" evidence="1">
    <location>
        <position position="84"/>
    </location>
    <ligand>
        <name>Mo-bis(molybdopterin guanine dinucleotide)</name>
        <dbReference type="ChEBI" id="CHEBI:60539"/>
    </ligand>
</feature>
<feature type="binding site" evidence="1">
    <location>
        <position position="151"/>
    </location>
    <ligand>
        <name>Mo-bis(molybdopterin guanine dinucleotide)</name>
        <dbReference type="ChEBI" id="CHEBI:60539"/>
    </ligand>
</feature>
<feature type="binding site" evidence="1">
    <location>
        <position position="176"/>
    </location>
    <ligand>
        <name>Mo-bis(molybdopterin guanine dinucleotide)</name>
        <dbReference type="ChEBI" id="CHEBI:60539"/>
    </ligand>
</feature>
<feature type="binding site" evidence="1">
    <location>
        <position position="180"/>
    </location>
    <ligand>
        <name>Mo-bis(molybdopterin guanine dinucleotide)</name>
        <dbReference type="ChEBI" id="CHEBI:60539"/>
    </ligand>
</feature>
<feature type="binding site" evidence="1">
    <location>
        <begin position="213"/>
        <end position="220"/>
    </location>
    <ligand>
        <name>Mo-bis(molybdopterin guanine dinucleotide)</name>
        <dbReference type="ChEBI" id="CHEBI:60539"/>
    </ligand>
</feature>
<feature type="binding site" evidence="1">
    <location>
        <begin position="244"/>
        <end position="248"/>
    </location>
    <ligand>
        <name>Mo-bis(molybdopterin guanine dinucleotide)</name>
        <dbReference type="ChEBI" id="CHEBI:60539"/>
    </ligand>
</feature>
<feature type="binding site" evidence="1">
    <location>
        <begin position="263"/>
        <end position="265"/>
    </location>
    <ligand>
        <name>Mo-bis(molybdopterin guanine dinucleotide)</name>
        <dbReference type="ChEBI" id="CHEBI:60539"/>
    </ligand>
</feature>
<feature type="binding site" evidence="1">
    <location>
        <position position="373"/>
    </location>
    <ligand>
        <name>Mo-bis(molybdopterin guanine dinucleotide)</name>
        <dbReference type="ChEBI" id="CHEBI:60539"/>
    </ligand>
</feature>
<feature type="binding site" evidence="1">
    <location>
        <position position="377"/>
    </location>
    <ligand>
        <name>Mo-bis(molybdopterin guanine dinucleotide)</name>
        <dbReference type="ChEBI" id="CHEBI:60539"/>
    </ligand>
</feature>
<feature type="binding site" evidence="1">
    <location>
        <position position="483"/>
    </location>
    <ligand>
        <name>Mo-bis(molybdopterin guanine dinucleotide)</name>
        <dbReference type="ChEBI" id="CHEBI:60539"/>
    </ligand>
</feature>
<feature type="binding site" evidence="1">
    <location>
        <begin position="509"/>
        <end position="510"/>
    </location>
    <ligand>
        <name>Mo-bis(molybdopterin guanine dinucleotide)</name>
        <dbReference type="ChEBI" id="CHEBI:60539"/>
    </ligand>
</feature>
<feature type="binding site" evidence="1">
    <location>
        <position position="532"/>
    </location>
    <ligand>
        <name>Mo-bis(molybdopterin guanine dinucleotide)</name>
        <dbReference type="ChEBI" id="CHEBI:60539"/>
    </ligand>
</feature>
<feature type="binding site" evidence="1">
    <location>
        <position position="559"/>
    </location>
    <ligand>
        <name>Mo-bis(molybdopterin guanine dinucleotide)</name>
        <dbReference type="ChEBI" id="CHEBI:60539"/>
    </ligand>
</feature>
<feature type="binding site" evidence="1">
    <location>
        <begin position="719"/>
        <end position="728"/>
    </location>
    <ligand>
        <name>Mo-bis(molybdopterin guanine dinucleotide)</name>
        <dbReference type="ChEBI" id="CHEBI:60539"/>
    </ligand>
</feature>
<feature type="binding site" evidence="1">
    <location>
        <position position="795"/>
    </location>
    <ligand>
        <name>substrate</name>
    </ligand>
</feature>
<feature type="binding site" evidence="1">
    <location>
        <position position="803"/>
    </location>
    <ligand>
        <name>Mo-bis(molybdopterin guanine dinucleotide)</name>
        <dbReference type="ChEBI" id="CHEBI:60539"/>
    </ligand>
</feature>
<feature type="binding site" evidence="1">
    <location>
        <position position="820"/>
    </location>
    <ligand>
        <name>Mo-bis(molybdopterin guanine dinucleotide)</name>
        <dbReference type="ChEBI" id="CHEBI:60539"/>
    </ligand>
</feature>
<name>NAPA_YERE8</name>
<dbReference type="EC" id="1.9.6.1" evidence="1"/>
<dbReference type="EMBL" id="AM286415">
    <property type="protein sequence ID" value="CAL11250.1"/>
    <property type="molecule type" value="Genomic_DNA"/>
</dbReference>
<dbReference type="RefSeq" id="WP_011815828.1">
    <property type="nucleotide sequence ID" value="NC_008800.1"/>
</dbReference>
<dbReference type="RefSeq" id="YP_001005483.1">
    <property type="nucleotide sequence ID" value="NC_008800.1"/>
</dbReference>
<dbReference type="SMR" id="A1JL26"/>
<dbReference type="KEGG" id="yen:YE1156"/>
<dbReference type="PATRIC" id="fig|393305.7.peg.1262"/>
<dbReference type="eggNOG" id="COG0243">
    <property type="taxonomic scope" value="Bacteria"/>
</dbReference>
<dbReference type="HOGENOM" id="CLU_000422_13_4_6"/>
<dbReference type="OrthoDB" id="9816402at2"/>
<dbReference type="Proteomes" id="UP000000642">
    <property type="component" value="Chromosome"/>
</dbReference>
<dbReference type="GO" id="GO:0016020">
    <property type="term" value="C:membrane"/>
    <property type="evidence" value="ECO:0007669"/>
    <property type="project" value="TreeGrafter"/>
</dbReference>
<dbReference type="GO" id="GO:0009325">
    <property type="term" value="C:nitrate reductase complex"/>
    <property type="evidence" value="ECO:0007669"/>
    <property type="project" value="TreeGrafter"/>
</dbReference>
<dbReference type="GO" id="GO:0042597">
    <property type="term" value="C:periplasmic space"/>
    <property type="evidence" value="ECO:0007669"/>
    <property type="project" value="UniProtKB-SubCell"/>
</dbReference>
<dbReference type="GO" id="GO:0051539">
    <property type="term" value="F:4 iron, 4 sulfur cluster binding"/>
    <property type="evidence" value="ECO:0007669"/>
    <property type="project" value="UniProtKB-KW"/>
</dbReference>
<dbReference type="GO" id="GO:0009055">
    <property type="term" value="F:electron transfer activity"/>
    <property type="evidence" value="ECO:0007669"/>
    <property type="project" value="UniProtKB-UniRule"/>
</dbReference>
<dbReference type="GO" id="GO:0005506">
    <property type="term" value="F:iron ion binding"/>
    <property type="evidence" value="ECO:0007669"/>
    <property type="project" value="UniProtKB-UniRule"/>
</dbReference>
<dbReference type="GO" id="GO:0030151">
    <property type="term" value="F:molybdenum ion binding"/>
    <property type="evidence" value="ECO:0007669"/>
    <property type="project" value="InterPro"/>
</dbReference>
<dbReference type="GO" id="GO:0043546">
    <property type="term" value="F:molybdopterin cofactor binding"/>
    <property type="evidence" value="ECO:0007669"/>
    <property type="project" value="InterPro"/>
</dbReference>
<dbReference type="GO" id="GO:0050140">
    <property type="term" value="F:nitrate reductase (cytochrome) activity"/>
    <property type="evidence" value="ECO:0007669"/>
    <property type="project" value="UniProtKB-EC"/>
</dbReference>
<dbReference type="GO" id="GO:0045333">
    <property type="term" value="P:cellular respiration"/>
    <property type="evidence" value="ECO:0007669"/>
    <property type="project" value="UniProtKB-ARBA"/>
</dbReference>
<dbReference type="GO" id="GO:0006777">
    <property type="term" value="P:Mo-molybdopterin cofactor biosynthetic process"/>
    <property type="evidence" value="ECO:0007669"/>
    <property type="project" value="UniProtKB-UniRule"/>
</dbReference>
<dbReference type="GO" id="GO:0042128">
    <property type="term" value="P:nitrate assimilation"/>
    <property type="evidence" value="ECO:0007669"/>
    <property type="project" value="UniProtKB-UniRule"/>
</dbReference>
<dbReference type="CDD" id="cd02791">
    <property type="entry name" value="MopB_CT_Nitrate-R-NapA-like"/>
    <property type="match status" value="1"/>
</dbReference>
<dbReference type="CDD" id="cd02754">
    <property type="entry name" value="MopB_Nitrate-R-NapA-like"/>
    <property type="match status" value="1"/>
</dbReference>
<dbReference type="FunFam" id="2.40.40.20:FF:000005">
    <property type="entry name" value="Periplasmic nitrate reductase"/>
    <property type="match status" value="1"/>
</dbReference>
<dbReference type="Gene3D" id="2.40.40.20">
    <property type="match status" value="1"/>
</dbReference>
<dbReference type="Gene3D" id="3.30.200.210">
    <property type="match status" value="1"/>
</dbReference>
<dbReference type="Gene3D" id="3.40.50.740">
    <property type="match status" value="1"/>
</dbReference>
<dbReference type="Gene3D" id="3.40.228.10">
    <property type="entry name" value="Dimethylsulfoxide Reductase, domain 2"/>
    <property type="match status" value="1"/>
</dbReference>
<dbReference type="HAMAP" id="MF_01630">
    <property type="entry name" value="Nitrate_reduct_NapA"/>
    <property type="match status" value="1"/>
</dbReference>
<dbReference type="InterPro" id="IPR009010">
    <property type="entry name" value="Asp_de-COase-like_dom_sf"/>
</dbReference>
<dbReference type="InterPro" id="IPR041957">
    <property type="entry name" value="CT_Nitrate-R-NapA-like"/>
</dbReference>
<dbReference type="InterPro" id="IPR006657">
    <property type="entry name" value="MoPterin_dinucl-bd_dom"/>
</dbReference>
<dbReference type="InterPro" id="IPR006656">
    <property type="entry name" value="Mopterin_OxRdtase"/>
</dbReference>
<dbReference type="InterPro" id="IPR006963">
    <property type="entry name" value="Mopterin_OxRdtase_4Fe-4S_dom"/>
</dbReference>
<dbReference type="InterPro" id="IPR027467">
    <property type="entry name" value="MopterinOxRdtase_cofactor_BS"/>
</dbReference>
<dbReference type="InterPro" id="IPR010051">
    <property type="entry name" value="Periplasm_NO3_reductase_lsu"/>
</dbReference>
<dbReference type="InterPro" id="IPR050123">
    <property type="entry name" value="Prok_molybdopt-oxidoreductase"/>
</dbReference>
<dbReference type="InterPro" id="IPR006311">
    <property type="entry name" value="TAT_signal"/>
</dbReference>
<dbReference type="InterPro" id="IPR019546">
    <property type="entry name" value="TAT_signal_bac_arc"/>
</dbReference>
<dbReference type="NCBIfam" id="TIGR01706">
    <property type="entry name" value="NAPA"/>
    <property type="match status" value="1"/>
</dbReference>
<dbReference type="NCBIfam" id="NF010055">
    <property type="entry name" value="PRK13532.1"/>
    <property type="match status" value="1"/>
</dbReference>
<dbReference type="NCBIfam" id="TIGR01409">
    <property type="entry name" value="TAT_signal_seq"/>
    <property type="match status" value="1"/>
</dbReference>
<dbReference type="PANTHER" id="PTHR43105:SF11">
    <property type="entry name" value="PERIPLASMIC NITRATE REDUCTASE"/>
    <property type="match status" value="1"/>
</dbReference>
<dbReference type="PANTHER" id="PTHR43105">
    <property type="entry name" value="RESPIRATORY NITRATE REDUCTASE"/>
    <property type="match status" value="1"/>
</dbReference>
<dbReference type="Pfam" id="PF04879">
    <property type="entry name" value="Molybdop_Fe4S4"/>
    <property type="match status" value="1"/>
</dbReference>
<dbReference type="Pfam" id="PF00384">
    <property type="entry name" value="Molybdopterin"/>
    <property type="match status" value="1"/>
</dbReference>
<dbReference type="Pfam" id="PF01568">
    <property type="entry name" value="Molydop_binding"/>
    <property type="match status" value="1"/>
</dbReference>
<dbReference type="Pfam" id="PF10518">
    <property type="entry name" value="TAT_signal"/>
    <property type="match status" value="1"/>
</dbReference>
<dbReference type="SMART" id="SM00926">
    <property type="entry name" value="Molybdop_Fe4S4"/>
    <property type="match status" value="1"/>
</dbReference>
<dbReference type="SUPFAM" id="SSF50692">
    <property type="entry name" value="ADC-like"/>
    <property type="match status" value="1"/>
</dbReference>
<dbReference type="SUPFAM" id="SSF53706">
    <property type="entry name" value="Formate dehydrogenase/DMSO reductase, domains 1-3"/>
    <property type="match status" value="1"/>
</dbReference>
<dbReference type="PROSITE" id="PS51669">
    <property type="entry name" value="4FE4S_MOW_BIS_MGD"/>
    <property type="match status" value="1"/>
</dbReference>
<dbReference type="PROSITE" id="PS00551">
    <property type="entry name" value="MOLYBDOPTERIN_PROK_1"/>
    <property type="match status" value="1"/>
</dbReference>
<dbReference type="PROSITE" id="PS51318">
    <property type="entry name" value="TAT"/>
    <property type="match status" value="1"/>
</dbReference>
<proteinExistence type="inferred from homology"/>
<organism>
    <name type="scientific">Yersinia enterocolitica serotype O:8 / biotype 1B (strain NCTC 13174 / 8081)</name>
    <dbReference type="NCBI Taxonomy" id="393305"/>
    <lineage>
        <taxon>Bacteria</taxon>
        <taxon>Pseudomonadati</taxon>
        <taxon>Pseudomonadota</taxon>
        <taxon>Gammaproteobacteria</taxon>
        <taxon>Enterobacterales</taxon>
        <taxon>Yersiniaceae</taxon>
        <taxon>Yersinia</taxon>
    </lineage>
</organism>
<sequence length="831" mass="93407">MKLSRRDFMKANAAVAAAAAAGLTIPTVAKAVVGETTNAIKWDKAPCRFCGTGCGVLVGTQNGRIVASQGDPDSPVNRGLNCVKGYFLPKIMYGKDRLTQPLLRMKDGQYDKEGDFTPISWEKAFDIMELKFKNALKEKGPTAVGMFGSGQWTVWEGYAASKLLKAGFRSNNLDPNARHCMASSVVGFMRTFGMDEPMGCYDDIEEADAFVLWGSNMAEMHPILWSRMTSRRLTNEHVRIAVLSTFEHRSFELADNPIVFTPQTDLVIMNYIANYIIQNNAVDQGFLDRHVNFRRGATDIGYGLRPTHPLEKAAKNPGSDASEPMSFDDFKAFVAEYTLEKTAKMSGVPEDQLESLAQLYADPKVKLVSYWTMGFNQHTRGVWANNMCYNLHLLTGKISKPGSGPFSLTGQPSACGTAREVGTFSHRLPADMVVTNEKHRQIAETKWQLPAGTIPEKVGLHAVAQDRALKDGTLNAYWVMCNNNMQAGPNINEERMPGWRDPRNFIVVSDPYPTISALAADLILPTAMWVEKEGAYGNAERRTQFWRQQVPAPGEAKSDLWQMVEFAKRFKVEEVWPDELINKKPEYRGKTLYDVLFANNVVNKYPLSEIPADQLNDEARDFGFYIQKGLFEEYADFGRGHGHDLAPFDRYHQERGLRWPVVNGKETLWRYREGFDPFVPKGEDVRFYGKPDGKAVIFALPYEPAAESPDQEYDLWLSTGRVLEHWHTGSMTRRVPELHRAFPEAVLFIHPLDAKARGLRRGDKVKVISRRGEVISLVETRGRNRPPQGLVYMPFFDAAQLVNNLTLDATDPLSKETDFKKCAVKLARVVA</sequence>
<keyword id="KW-0004">4Fe-4S</keyword>
<keyword id="KW-0249">Electron transport</keyword>
<keyword id="KW-0408">Iron</keyword>
<keyword id="KW-0411">Iron-sulfur</keyword>
<keyword id="KW-0479">Metal-binding</keyword>
<keyword id="KW-0500">Molybdenum</keyword>
<keyword id="KW-0534">Nitrate assimilation</keyword>
<keyword id="KW-0560">Oxidoreductase</keyword>
<keyword id="KW-0574">Periplasm</keyword>
<keyword id="KW-0732">Signal</keyword>
<keyword id="KW-0813">Transport</keyword>
<protein>
    <recommendedName>
        <fullName evidence="1">Periplasmic nitrate reductase</fullName>
        <ecNumber evidence="1">1.9.6.1</ecNumber>
    </recommendedName>
</protein>
<gene>
    <name evidence="1" type="primary">napA</name>
    <name type="ordered locus">YE1156</name>
</gene>
<comment type="function">
    <text evidence="1">Catalytic subunit of the periplasmic nitrate reductase complex NapAB. Receives electrons from NapB and catalyzes the reduction of nitrate to nitrite.</text>
</comment>
<comment type="catalytic activity">
    <reaction evidence="1">
        <text>2 Fe(II)-[cytochrome] + nitrate + 2 H(+) = 2 Fe(III)-[cytochrome] + nitrite + H2O</text>
        <dbReference type="Rhea" id="RHEA:12909"/>
        <dbReference type="Rhea" id="RHEA-COMP:11777"/>
        <dbReference type="Rhea" id="RHEA-COMP:11778"/>
        <dbReference type="ChEBI" id="CHEBI:15377"/>
        <dbReference type="ChEBI" id="CHEBI:15378"/>
        <dbReference type="ChEBI" id="CHEBI:16301"/>
        <dbReference type="ChEBI" id="CHEBI:17632"/>
        <dbReference type="ChEBI" id="CHEBI:29033"/>
        <dbReference type="ChEBI" id="CHEBI:29034"/>
        <dbReference type="EC" id="1.9.6.1"/>
    </reaction>
</comment>
<comment type="cofactor">
    <cofactor evidence="1">
        <name>[4Fe-4S] cluster</name>
        <dbReference type="ChEBI" id="CHEBI:49883"/>
    </cofactor>
    <text evidence="1">Binds 1 [4Fe-4S] cluster.</text>
</comment>
<comment type="cofactor">
    <cofactor evidence="1">
        <name>Mo-bis(molybdopterin guanine dinucleotide)</name>
        <dbReference type="ChEBI" id="CHEBI:60539"/>
    </cofactor>
    <text evidence="1">Binds 1 molybdenum-bis(molybdopterin guanine dinucleotide) (Mo-bis-MGD) cofactor per subunit.</text>
</comment>
<comment type="subunit">
    <text evidence="1">Component of the periplasmic nitrate reductase NapAB complex composed of NapA and NapB.</text>
</comment>
<comment type="subcellular location">
    <subcellularLocation>
        <location evidence="1">Periplasm</location>
    </subcellularLocation>
</comment>
<comment type="PTM">
    <text evidence="1">Predicted to be exported by the Tat system. The position of the signal peptide cleavage has not been experimentally proven.</text>
</comment>
<comment type="similarity">
    <text evidence="1">Belongs to the prokaryotic molybdopterin-containing oxidoreductase family. NasA/NapA/NarB subfamily.</text>
</comment>
<reference key="1">
    <citation type="journal article" date="2006" name="PLoS Genet.">
        <title>The complete genome sequence and comparative genome analysis of the high pathogenicity Yersinia enterocolitica strain 8081.</title>
        <authorList>
            <person name="Thomson N.R."/>
            <person name="Howard S."/>
            <person name="Wren B.W."/>
            <person name="Holden M.T.G."/>
            <person name="Crossman L."/>
            <person name="Challis G.L."/>
            <person name="Churcher C."/>
            <person name="Mungall K."/>
            <person name="Brooks K."/>
            <person name="Chillingworth T."/>
            <person name="Feltwell T."/>
            <person name="Abdellah Z."/>
            <person name="Hauser H."/>
            <person name="Jagels K."/>
            <person name="Maddison M."/>
            <person name="Moule S."/>
            <person name="Sanders M."/>
            <person name="Whitehead S."/>
            <person name="Quail M.A."/>
            <person name="Dougan G."/>
            <person name="Parkhill J."/>
            <person name="Prentice M.B."/>
        </authorList>
    </citation>
    <scope>NUCLEOTIDE SEQUENCE [LARGE SCALE GENOMIC DNA]</scope>
    <source>
        <strain>NCTC 13174 / 8081</strain>
    </source>
</reference>
<accession>A1JL26</accession>